<feature type="chain" id="PRO_1000143078" description="Small ribosomal subunit protein uS15">
    <location>
        <begin position="1"/>
        <end position="89"/>
    </location>
</feature>
<organism>
    <name type="scientific">Beijerinckia indica subsp. indica (strain ATCC 9039 / DSM 1715 / NCIMB 8712)</name>
    <dbReference type="NCBI Taxonomy" id="395963"/>
    <lineage>
        <taxon>Bacteria</taxon>
        <taxon>Pseudomonadati</taxon>
        <taxon>Pseudomonadota</taxon>
        <taxon>Alphaproteobacteria</taxon>
        <taxon>Hyphomicrobiales</taxon>
        <taxon>Beijerinckiaceae</taxon>
        <taxon>Beijerinckia</taxon>
    </lineage>
</organism>
<keyword id="KW-1185">Reference proteome</keyword>
<keyword id="KW-0687">Ribonucleoprotein</keyword>
<keyword id="KW-0689">Ribosomal protein</keyword>
<keyword id="KW-0694">RNA-binding</keyword>
<keyword id="KW-0699">rRNA-binding</keyword>
<sequence length="89" mass="10325">MSITPERKTALVKEYALKDGDTGSPEVQVAILTERIANLTEHFKTHVKDNHSRRGLLKLVSQRRQLLDYVKGRDEPRYKALIERLGIRR</sequence>
<reference key="1">
    <citation type="journal article" date="2010" name="J. Bacteriol.">
        <title>Complete genome sequence of Beijerinckia indica subsp. indica.</title>
        <authorList>
            <person name="Tamas I."/>
            <person name="Dedysh S.N."/>
            <person name="Liesack W."/>
            <person name="Stott M.B."/>
            <person name="Alam M."/>
            <person name="Murrell J.C."/>
            <person name="Dunfield P.F."/>
        </authorList>
    </citation>
    <scope>NUCLEOTIDE SEQUENCE [LARGE SCALE GENOMIC DNA]</scope>
    <source>
        <strain>ATCC 9039 / DSM 1715 / NCIMB 8712</strain>
    </source>
</reference>
<comment type="function">
    <text evidence="1">One of the primary rRNA binding proteins, it binds directly to 16S rRNA where it helps nucleate assembly of the platform of the 30S subunit by binding and bridging several RNA helices of the 16S rRNA.</text>
</comment>
<comment type="function">
    <text evidence="1">Forms an intersubunit bridge (bridge B4) with the 23S rRNA of the 50S subunit in the ribosome.</text>
</comment>
<comment type="subunit">
    <text evidence="1">Part of the 30S ribosomal subunit. Forms a bridge to the 50S subunit in the 70S ribosome, contacting the 23S rRNA.</text>
</comment>
<comment type="similarity">
    <text evidence="1">Belongs to the universal ribosomal protein uS15 family.</text>
</comment>
<gene>
    <name evidence="1" type="primary">rpsO</name>
    <name type="ordered locus">Bind_3193</name>
</gene>
<evidence type="ECO:0000255" key="1">
    <source>
        <dbReference type="HAMAP-Rule" id="MF_01343"/>
    </source>
</evidence>
<evidence type="ECO:0000305" key="2"/>
<protein>
    <recommendedName>
        <fullName evidence="1">Small ribosomal subunit protein uS15</fullName>
    </recommendedName>
    <alternativeName>
        <fullName evidence="2">30S ribosomal protein S15</fullName>
    </alternativeName>
</protein>
<accession>B2ICY8</accession>
<name>RS15_BEII9</name>
<dbReference type="EMBL" id="CP001016">
    <property type="protein sequence ID" value="ACB96753.1"/>
    <property type="molecule type" value="Genomic_DNA"/>
</dbReference>
<dbReference type="RefSeq" id="WP_012386101.1">
    <property type="nucleotide sequence ID" value="NC_010581.1"/>
</dbReference>
<dbReference type="SMR" id="B2ICY8"/>
<dbReference type="STRING" id="395963.Bind_3193"/>
<dbReference type="KEGG" id="bid:Bind_3193"/>
<dbReference type="eggNOG" id="COG0184">
    <property type="taxonomic scope" value="Bacteria"/>
</dbReference>
<dbReference type="HOGENOM" id="CLU_148518_0_0_5"/>
<dbReference type="OrthoDB" id="9799262at2"/>
<dbReference type="Proteomes" id="UP000001695">
    <property type="component" value="Chromosome"/>
</dbReference>
<dbReference type="GO" id="GO:0022627">
    <property type="term" value="C:cytosolic small ribosomal subunit"/>
    <property type="evidence" value="ECO:0007669"/>
    <property type="project" value="TreeGrafter"/>
</dbReference>
<dbReference type="GO" id="GO:0019843">
    <property type="term" value="F:rRNA binding"/>
    <property type="evidence" value="ECO:0007669"/>
    <property type="project" value="UniProtKB-UniRule"/>
</dbReference>
<dbReference type="GO" id="GO:0003735">
    <property type="term" value="F:structural constituent of ribosome"/>
    <property type="evidence" value="ECO:0007669"/>
    <property type="project" value="InterPro"/>
</dbReference>
<dbReference type="GO" id="GO:0006412">
    <property type="term" value="P:translation"/>
    <property type="evidence" value="ECO:0007669"/>
    <property type="project" value="UniProtKB-UniRule"/>
</dbReference>
<dbReference type="CDD" id="cd00353">
    <property type="entry name" value="Ribosomal_S15p_S13e"/>
    <property type="match status" value="1"/>
</dbReference>
<dbReference type="FunFam" id="1.10.287.10:FF:000002">
    <property type="entry name" value="30S ribosomal protein S15"/>
    <property type="match status" value="1"/>
</dbReference>
<dbReference type="Gene3D" id="6.10.250.3130">
    <property type="match status" value="1"/>
</dbReference>
<dbReference type="Gene3D" id="1.10.287.10">
    <property type="entry name" value="S15/NS1, RNA-binding"/>
    <property type="match status" value="1"/>
</dbReference>
<dbReference type="HAMAP" id="MF_01343_B">
    <property type="entry name" value="Ribosomal_uS15_B"/>
    <property type="match status" value="1"/>
</dbReference>
<dbReference type="InterPro" id="IPR000589">
    <property type="entry name" value="Ribosomal_uS15"/>
</dbReference>
<dbReference type="InterPro" id="IPR005290">
    <property type="entry name" value="Ribosomal_uS15_bac-type"/>
</dbReference>
<dbReference type="InterPro" id="IPR009068">
    <property type="entry name" value="uS15_NS1_RNA-bd_sf"/>
</dbReference>
<dbReference type="NCBIfam" id="TIGR00952">
    <property type="entry name" value="S15_bact"/>
    <property type="match status" value="1"/>
</dbReference>
<dbReference type="PANTHER" id="PTHR23321">
    <property type="entry name" value="RIBOSOMAL PROTEIN S15, BACTERIAL AND ORGANELLAR"/>
    <property type="match status" value="1"/>
</dbReference>
<dbReference type="PANTHER" id="PTHR23321:SF26">
    <property type="entry name" value="SMALL RIBOSOMAL SUBUNIT PROTEIN US15M"/>
    <property type="match status" value="1"/>
</dbReference>
<dbReference type="Pfam" id="PF00312">
    <property type="entry name" value="Ribosomal_S15"/>
    <property type="match status" value="1"/>
</dbReference>
<dbReference type="SMART" id="SM01387">
    <property type="entry name" value="Ribosomal_S15"/>
    <property type="match status" value="1"/>
</dbReference>
<dbReference type="SUPFAM" id="SSF47060">
    <property type="entry name" value="S15/NS1 RNA-binding domain"/>
    <property type="match status" value="1"/>
</dbReference>
<dbReference type="PROSITE" id="PS00362">
    <property type="entry name" value="RIBOSOMAL_S15"/>
    <property type="match status" value="1"/>
</dbReference>
<proteinExistence type="inferred from homology"/>